<proteinExistence type="inferred from homology"/>
<organism>
    <name type="scientific">Escherichia coli O6:H1 (strain CFT073 / ATCC 700928 / UPEC)</name>
    <dbReference type="NCBI Taxonomy" id="199310"/>
    <lineage>
        <taxon>Bacteria</taxon>
        <taxon>Pseudomonadati</taxon>
        <taxon>Pseudomonadota</taxon>
        <taxon>Gammaproteobacteria</taxon>
        <taxon>Enterobacterales</taxon>
        <taxon>Enterobacteriaceae</taxon>
        <taxon>Escherichia</taxon>
    </lineage>
</organism>
<feature type="signal peptide" evidence="2">
    <location>
        <begin position="1"/>
        <end position="18"/>
    </location>
</feature>
<feature type="peptide" id="PRO_0000043191" description="Entericidin A">
    <location>
        <begin position="19"/>
        <end position="41"/>
    </location>
</feature>
<feature type="lipid moiety-binding region" description="N-palmitoyl cysteine" evidence="3">
    <location>
        <position position="19"/>
    </location>
</feature>
<feature type="lipid moiety-binding region" description="S-diacylglycerol cysteine" evidence="3">
    <location>
        <position position="19"/>
    </location>
</feature>
<name>ECNA_ECOL6</name>
<keyword id="KW-1003">Cell membrane</keyword>
<keyword id="KW-0449">Lipoprotein</keyword>
<keyword id="KW-0472">Membrane</keyword>
<keyword id="KW-0564">Palmitate</keyword>
<keyword id="KW-1185">Reference proteome</keyword>
<keyword id="KW-0732">Signal</keyword>
<gene>
    <name type="primary">ecnA</name>
    <name type="ordered locus">c5234</name>
</gene>
<protein>
    <recommendedName>
        <fullName>Entericidin A</fullName>
    </recommendedName>
</protein>
<evidence type="ECO:0000250" key="1"/>
<evidence type="ECO:0000255" key="2">
    <source>
        <dbReference type="PROSITE-ProRule" id="PRU00303"/>
    </source>
</evidence>
<evidence type="ECO:0000305" key="3"/>
<comment type="function">
    <text evidence="1">Acts as antidote to the effect of entericidin B.</text>
</comment>
<comment type="subcellular location">
    <subcellularLocation>
        <location evidence="2">Cell membrane</location>
        <topology evidence="2">Lipid-anchor</topology>
    </subcellularLocation>
</comment>
<comment type="similarity">
    <text evidence="3">Belongs to the EcnA/EcnB lipoprotein family.</text>
</comment>
<dbReference type="EMBL" id="AE014075">
    <property type="protein sequence ID" value="AAN83656.1"/>
    <property type="molecule type" value="Genomic_DNA"/>
</dbReference>
<dbReference type="RefSeq" id="WP_000977757.1">
    <property type="nucleotide sequence ID" value="NZ_CP051263.1"/>
</dbReference>
<dbReference type="STRING" id="199310.c5234"/>
<dbReference type="GeneID" id="93777676"/>
<dbReference type="KEGG" id="ecc:c5234"/>
<dbReference type="eggNOG" id="COG5510">
    <property type="taxonomic scope" value="Bacteria"/>
</dbReference>
<dbReference type="HOGENOM" id="CLU_193827_2_1_6"/>
<dbReference type="BioCyc" id="ECOL199310:C5234-MONOMER"/>
<dbReference type="Proteomes" id="UP000001410">
    <property type="component" value="Chromosome"/>
</dbReference>
<dbReference type="GO" id="GO:0005886">
    <property type="term" value="C:plasma membrane"/>
    <property type="evidence" value="ECO:0007669"/>
    <property type="project" value="UniProtKB-SubCell"/>
</dbReference>
<dbReference type="GO" id="GO:0009636">
    <property type="term" value="P:response to toxic substance"/>
    <property type="evidence" value="ECO:0007669"/>
    <property type="project" value="InterPro"/>
</dbReference>
<dbReference type="InterPro" id="IPR012556">
    <property type="entry name" value="Entericidin"/>
</dbReference>
<dbReference type="NCBIfam" id="NF007319">
    <property type="entry name" value="PRK09810.1"/>
    <property type="match status" value="1"/>
</dbReference>
<dbReference type="Pfam" id="PF08085">
    <property type="entry name" value="Entericidin"/>
    <property type="match status" value="1"/>
</dbReference>
<dbReference type="PROSITE" id="PS51257">
    <property type="entry name" value="PROKAR_LIPOPROTEIN"/>
    <property type="match status" value="1"/>
</dbReference>
<accession>P0ADB5</accession>
<accession>P56548</accession>
<reference key="1">
    <citation type="journal article" date="2002" name="Proc. Natl. Acad. Sci. U.S.A.">
        <title>Extensive mosaic structure revealed by the complete genome sequence of uropathogenic Escherichia coli.</title>
        <authorList>
            <person name="Welch R.A."/>
            <person name="Burland V."/>
            <person name="Plunkett G. III"/>
            <person name="Redford P."/>
            <person name="Roesch P."/>
            <person name="Rasko D."/>
            <person name="Buckles E.L."/>
            <person name="Liou S.-R."/>
            <person name="Boutin A."/>
            <person name="Hackett J."/>
            <person name="Stroud D."/>
            <person name="Mayhew G.F."/>
            <person name="Rose D.J."/>
            <person name="Zhou S."/>
            <person name="Schwartz D.C."/>
            <person name="Perna N.T."/>
            <person name="Mobley H.L.T."/>
            <person name="Donnenberg M.S."/>
            <person name="Blattner F.R."/>
        </authorList>
    </citation>
    <scope>NUCLEOTIDE SEQUENCE [LARGE SCALE GENOMIC DNA]</scope>
    <source>
        <strain>CFT073 / ATCC 700928 / UPEC</strain>
    </source>
</reference>
<sequence length="41" mass="4359">MMKRLIVLVLLASTLLTGCNTARGFGEDIKHLGNSISRAAS</sequence>